<dbReference type="EMBL" id="S68729">
    <property type="protein sequence ID" value="AAB29486.1"/>
    <property type="molecule type" value="mRNA"/>
</dbReference>
<dbReference type="PIR" id="PQ0766">
    <property type="entry name" value="PQ0766"/>
</dbReference>
<dbReference type="SMR" id="Q36718"/>
<dbReference type="ExpressionAtlas" id="Q36718">
    <property type="expression patterns" value="baseline and differential"/>
</dbReference>
<dbReference type="GO" id="GO:0009535">
    <property type="term" value="C:chloroplast thylakoid membrane"/>
    <property type="evidence" value="ECO:0007669"/>
    <property type="project" value="UniProtKB-SubCell"/>
</dbReference>
<dbReference type="GO" id="GO:0009522">
    <property type="term" value="C:photosystem I"/>
    <property type="evidence" value="ECO:0007669"/>
    <property type="project" value="UniProtKB-KW"/>
</dbReference>
<dbReference type="GO" id="GO:0009523">
    <property type="term" value="C:photosystem II"/>
    <property type="evidence" value="ECO:0007669"/>
    <property type="project" value="UniProtKB-KW"/>
</dbReference>
<dbReference type="GO" id="GO:0016168">
    <property type="term" value="F:chlorophyll binding"/>
    <property type="evidence" value="ECO:0007669"/>
    <property type="project" value="UniProtKB-KW"/>
</dbReference>
<dbReference type="GO" id="GO:0046872">
    <property type="term" value="F:metal ion binding"/>
    <property type="evidence" value="ECO:0007669"/>
    <property type="project" value="UniProtKB-KW"/>
</dbReference>
<dbReference type="GO" id="GO:0009765">
    <property type="term" value="P:photosynthesis, light harvesting"/>
    <property type="evidence" value="ECO:0007669"/>
    <property type="project" value="InterPro"/>
</dbReference>
<dbReference type="Gene3D" id="1.10.3460.10">
    <property type="entry name" value="Chlorophyll a/b binding protein domain"/>
    <property type="match status" value="1"/>
</dbReference>
<dbReference type="InterPro" id="IPR001344">
    <property type="entry name" value="Chloro_AB-bd_pln"/>
</dbReference>
<dbReference type="InterPro" id="IPR022796">
    <property type="entry name" value="Chloroa_b-bind"/>
</dbReference>
<dbReference type="PANTHER" id="PTHR21649">
    <property type="entry name" value="CHLOROPHYLL A/B BINDING PROTEIN"/>
    <property type="match status" value="1"/>
</dbReference>
<dbReference type="Pfam" id="PF00504">
    <property type="entry name" value="Chloroa_b-bind"/>
    <property type="match status" value="1"/>
</dbReference>
<dbReference type="SUPFAM" id="SSF103511">
    <property type="entry name" value="Chlorophyll a-b binding protein"/>
    <property type="match status" value="1"/>
</dbReference>
<organism>
    <name type="scientific">Hordeum vulgare</name>
    <name type="common">Barley</name>
    <dbReference type="NCBI Taxonomy" id="4513"/>
    <lineage>
        <taxon>Eukaryota</taxon>
        <taxon>Viridiplantae</taxon>
        <taxon>Streptophyta</taxon>
        <taxon>Embryophyta</taxon>
        <taxon>Tracheophyta</taxon>
        <taxon>Spermatophyta</taxon>
        <taxon>Magnoliopsida</taxon>
        <taxon>Liliopsida</taxon>
        <taxon>Poales</taxon>
        <taxon>Poaceae</taxon>
        <taxon>BOP clade</taxon>
        <taxon>Pooideae</taxon>
        <taxon>Triticodae</taxon>
        <taxon>Triticeae</taxon>
        <taxon>Hordeinae</taxon>
        <taxon>Hordeum</taxon>
    </lineage>
</organism>
<reference key="1">
    <citation type="journal article" date="1993" name="Plant Physiol.">
        <title>Light-induced biogenesis of light-harvesting complex I (LHC I) during chloroplast development in barley (Hordeum vulgare). Studies using cDNA clones of the 21- and 20-kilodalton LHC I apoproteins.</title>
        <authorList>
            <person name="Anandan S."/>
            <person name="Morishige D.T."/>
            <person name="Thornber J.P."/>
        </authorList>
    </citation>
    <scope>NUCLEOTIDE SEQUENCE [MRNA]</scope>
    <scope>PROTEIN SEQUENCE OF 32-48</scope>
    <scope>INDUCTION BY LIGHT</scope>
</reference>
<evidence type="ECO:0000250" key="1"/>
<evidence type="ECO:0000255" key="2"/>
<evidence type="ECO:0000256" key="3">
    <source>
        <dbReference type="SAM" id="MobiDB-lite"/>
    </source>
</evidence>
<evidence type="ECO:0000269" key="4">
    <source>
    </source>
</evidence>
<evidence type="ECO:0000305" key="5"/>
<gene>
    <name type="primary">LHC Ib-20</name>
</gene>
<feature type="transit peptide" description="Chloroplast" evidence="4">
    <location>
        <begin position="1" status="less than"/>
        <end position="31"/>
    </location>
</feature>
<feature type="chain" id="PRO_0000337295" description="Chlorophyll a-b binding protein 1B-20, chloroplastic">
    <location>
        <begin position="32"/>
        <end position="231"/>
    </location>
</feature>
<feature type="transmembrane region" description="Helical" evidence="2">
    <location>
        <begin position="183"/>
        <end position="199"/>
    </location>
</feature>
<feature type="region of interest" description="Disordered" evidence="3">
    <location>
        <begin position="1"/>
        <end position="25"/>
    </location>
</feature>
<feature type="binding site" description="axial binding residue" evidence="1">
    <location>
        <position position="36"/>
    </location>
    <ligand>
        <name>chlorophyll b</name>
        <dbReference type="ChEBI" id="CHEBI:61721"/>
        <label>1</label>
    </ligand>
    <ligandPart>
        <name>Mg</name>
        <dbReference type="ChEBI" id="CHEBI:25107"/>
    </ligandPart>
</feature>
<feature type="binding site" evidence="1">
    <location>
        <position position="56"/>
    </location>
    <ligand>
        <name>chlorophyll a</name>
        <dbReference type="ChEBI" id="CHEBI:58416"/>
        <label>1</label>
    </ligand>
</feature>
<feature type="binding site" evidence="1">
    <location>
        <position position="80"/>
    </location>
    <ligand>
        <name>chlorophyll b</name>
        <dbReference type="ChEBI" id="CHEBI:61721"/>
        <label>2</label>
    </ligand>
</feature>
<feature type="binding site" evidence="1">
    <location>
        <position position="118"/>
    </location>
    <ligand>
        <name>chlorophyll b</name>
        <dbReference type="ChEBI" id="CHEBI:61721"/>
        <label>3</label>
    </ligand>
</feature>
<feature type="binding site" description="axial binding residue" evidence="1">
    <location>
        <position position="133"/>
    </location>
    <ligand>
        <name>chlorophyll b</name>
        <dbReference type="ChEBI" id="CHEBI:61721"/>
        <label>3</label>
    </ligand>
    <ligandPart>
        <name>Mg</name>
        <dbReference type="ChEBI" id="CHEBI:25107"/>
    </ligandPart>
</feature>
<feature type="binding site" evidence="1">
    <location>
        <position position="136"/>
    </location>
    <ligand>
        <name>chlorophyll b</name>
        <dbReference type="ChEBI" id="CHEBI:61721"/>
        <label>4</label>
    </ligand>
</feature>
<feature type="binding site" evidence="1">
    <location>
        <position position="182"/>
    </location>
    <ligand>
        <name>chlorophyll a</name>
        <dbReference type="ChEBI" id="CHEBI:58416"/>
        <label>5</label>
    </ligand>
</feature>
<feature type="binding site" description="axial binding residue" evidence="1">
    <location>
        <position position="183"/>
    </location>
    <ligand>
        <name>chlorophyll a</name>
        <dbReference type="ChEBI" id="CHEBI:58416"/>
        <label>3</label>
    </ligand>
    <ligandPart>
        <name>Mg</name>
        <dbReference type="ChEBI" id="CHEBI:25107"/>
    </ligandPart>
</feature>
<feature type="binding site" description="axial binding residue" evidence="1">
    <location>
        <position position="186"/>
    </location>
    <ligand>
        <name>chlorophyll a</name>
        <dbReference type="ChEBI" id="CHEBI:58416"/>
        <label>4</label>
    </ligand>
    <ligandPart>
        <name>Mg</name>
        <dbReference type="ChEBI" id="CHEBI:25107"/>
    </ligandPart>
</feature>
<feature type="binding site" evidence="1">
    <location>
        <position position="188"/>
    </location>
    <ligand>
        <name>chlorophyll a</name>
        <dbReference type="ChEBI" id="CHEBI:58416"/>
        <label>1</label>
    </ligand>
</feature>
<feature type="binding site" description="axial binding residue" evidence="1">
    <location>
        <position position="200"/>
    </location>
    <ligand>
        <name>chlorophyll a</name>
        <dbReference type="ChEBI" id="CHEBI:58416"/>
        <label>5</label>
    </ligand>
    <ligandPart>
        <name>Mg</name>
        <dbReference type="ChEBI" id="CHEBI:25107"/>
    </ligandPart>
</feature>
<feature type="binding site" description="axial binding residue" evidence="1">
    <location>
        <position position="215"/>
    </location>
    <ligand>
        <name>chlorophyll a</name>
        <dbReference type="ChEBI" id="CHEBI:58416"/>
        <label>6</label>
    </ligand>
    <ligandPart>
        <name>Mg</name>
        <dbReference type="ChEBI" id="CHEBI:25107"/>
    </ligandPart>
</feature>
<feature type="non-terminal residue">
    <location>
        <position position="1"/>
    </location>
</feature>
<protein>
    <recommendedName>
        <fullName>Chlorophyll a-b binding protein 1B-20, chloroplastic</fullName>
    </recommendedName>
    <alternativeName>
        <fullName>LHCI type I CAB-1B-20</fullName>
    </alternativeName>
    <alternativeName>
        <fullName>Light-harvesting complex I 20 kDa protein</fullName>
    </alternativeName>
</protein>
<sequence>RIQAYRFRTRVPPSPAASGSPRSTRRDVAVQAKGSWLPGLQSPAYLDGSLEGDNGFDPLALAEDPEDLRWFVQADVVNGRWAMLGVAGMLIPEVLTKAGLMNAPEWLRLPGKETYFASSSTALRVHMSSTYVEIRRWQDIKNPGSVNQDPIFKSYSLPPHECGYPGRVFNPLNFAPLENKEKELANGRLAMLAFLGFLVQHNVHGKGPFENLQQHLADPWHNTIIQTISGQ</sequence>
<keyword id="KW-0148">Chlorophyll</keyword>
<keyword id="KW-0150">Chloroplast</keyword>
<keyword id="KW-0157">Chromophore</keyword>
<keyword id="KW-0903">Direct protein sequencing</keyword>
<keyword id="KW-0460">Magnesium</keyword>
<keyword id="KW-0472">Membrane</keyword>
<keyword id="KW-0479">Metal-binding</keyword>
<keyword id="KW-0597">Phosphoprotein</keyword>
<keyword id="KW-0602">Photosynthesis</keyword>
<keyword id="KW-0603">Photosystem I</keyword>
<keyword id="KW-0604">Photosystem II</keyword>
<keyword id="KW-0934">Plastid</keyword>
<keyword id="KW-0793">Thylakoid</keyword>
<keyword id="KW-0809">Transit peptide</keyword>
<keyword id="KW-0812">Transmembrane</keyword>
<keyword id="KW-1133">Transmembrane helix</keyword>
<comment type="function">
    <text evidence="1">The light-harvesting complex (LHC) functions as a light receptor, it captures and delivers excitation energy to photosystems with which it is closely associated.</text>
</comment>
<comment type="cofactor">
    <text evidence="1">Binds at least 14 chlorophylls (8 Chl-a and 6 Chl-b) and carotenoids such as lutein and neoxanthin.</text>
</comment>
<comment type="subunit">
    <text>The LHC complex consists of chlorophyll a-b binding proteins.</text>
</comment>
<comment type="subcellular location">
    <subcellularLocation>
        <location evidence="5">Plastid</location>
        <location evidence="5">Chloroplast thylakoid membrane</location>
        <topology evidence="5">Single-pass membrane protein</topology>
    </subcellularLocation>
</comment>
<comment type="induction">
    <text evidence="4">By light.</text>
</comment>
<comment type="PTM">
    <text evidence="1">Photoregulated by reversible phosphorylation of its threonine residues.</text>
</comment>
<comment type="similarity">
    <text evidence="5">Belongs to the light-harvesting chlorophyll a/b-binding (LHC) protein family.</text>
</comment>
<proteinExistence type="evidence at protein level"/>
<name>CB120_HORVU</name>
<accession>Q36718</accession>